<proteinExistence type="inferred from homology"/>
<reference key="1">
    <citation type="journal article" date="2002" name="Arch. Microbiol.">
        <title>Genes involved in the anaerobic degradation of ethylbenzene in a denitrifying bacterium, strain EbN1.</title>
        <authorList>
            <person name="Rabus R."/>
            <person name="Kube M."/>
            <person name="Beck A."/>
            <person name="Widdel F."/>
            <person name="Reinhardt R."/>
        </authorList>
    </citation>
    <scope>NUCLEOTIDE SEQUENCE [GENOMIC DNA]</scope>
</reference>
<reference key="2">
    <citation type="journal article" date="2005" name="Arch. Microbiol.">
        <title>The genome sequence of an anaerobic aromatic-degrading denitrifying bacterium, strain EbN1.</title>
        <authorList>
            <person name="Rabus R."/>
            <person name="Kube M."/>
            <person name="Heider J."/>
            <person name="Beck A."/>
            <person name="Heitmann K."/>
            <person name="Widdel F."/>
            <person name="Reinhardt R."/>
        </authorList>
    </citation>
    <scope>NUCLEOTIDE SEQUENCE [LARGE SCALE GENOMIC DNA]</scope>
    <source>
        <strain>DSM 19018 / LMG 30748 / EbN1</strain>
    </source>
</reference>
<sequence>MTFPSHNPPETGHPSAAPDEALPAAEAPVPGDPEARFSSRSIRSFVLRQGRMSVAQQRHLDETLPKVGIPYRVAPLDLDAAFGRAAPKIVEIGFGMGETTAKIAAALPDKDFLTIEVHGPGVGSLCKLIAEGVLDNVRIVQHDAVEVLRDMIPERALAGVHVFFPDPWHKKRHHKRRIIQPDFVALIASRLAPGAYLHCATDWEEYAQWMLEVLAAEPALENTADGYAPRPAYRPLTKFENRGLKLGHGVWDLVFRRRG</sequence>
<protein>
    <recommendedName>
        <fullName evidence="2">tRNA (guanine-N(7)-)-methyltransferase</fullName>
        <ecNumber evidence="2">2.1.1.33</ecNumber>
    </recommendedName>
    <alternativeName>
        <fullName evidence="2">tRNA (guanine(46)-N(7))-methyltransferase</fullName>
    </alternativeName>
    <alternativeName>
        <fullName evidence="2">tRNA(m7G46)-methyltransferase</fullName>
    </alternativeName>
</protein>
<dbReference type="EC" id="2.1.1.33" evidence="2"/>
<dbReference type="EMBL" id="CR555306">
    <property type="protein sequence ID" value="CAI07420.1"/>
    <property type="molecule type" value="Genomic_DNA"/>
</dbReference>
<dbReference type="RefSeq" id="WP_011237140.1">
    <property type="nucleotide sequence ID" value="NC_006513.1"/>
</dbReference>
<dbReference type="SMR" id="Q8G9C6"/>
<dbReference type="STRING" id="76114.c1A43"/>
<dbReference type="KEGG" id="eba:c1A43"/>
<dbReference type="eggNOG" id="COG0220">
    <property type="taxonomic scope" value="Bacteria"/>
</dbReference>
<dbReference type="HOGENOM" id="CLU_050910_0_1_4"/>
<dbReference type="UniPathway" id="UPA00989"/>
<dbReference type="Proteomes" id="UP000006552">
    <property type="component" value="Chromosome"/>
</dbReference>
<dbReference type="GO" id="GO:0043527">
    <property type="term" value="C:tRNA methyltransferase complex"/>
    <property type="evidence" value="ECO:0007669"/>
    <property type="project" value="TreeGrafter"/>
</dbReference>
<dbReference type="GO" id="GO:0008176">
    <property type="term" value="F:tRNA (guanine(46)-N7)-methyltransferase activity"/>
    <property type="evidence" value="ECO:0007669"/>
    <property type="project" value="UniProtKB-UniRule"/>
</dbReference>
<dbReference type="CDD" id="cd02440">
    <property type="entry name" value="AdoMet_MTases"/>
    <property type="match status" value="1"/>
</dbReference>
<dbReference type="FunFam" id="3.40.50.150:FF:000035">
    <property type="entry name" value="tRNA (guanine-N(7)-)-methyltransferase"/>
    <property type="match status" value="1"/>
</dbReference>
<dbReference type="Gene3D" id="3.40.50.150">
    <property type="entry name" value="Vaccinia Virus protein VP39"/>
    <property type="match status" value="1"/>
</dbReference>
<dbReference type="HAMAP" id="MF_01057">
    <property type="entry name" value="tRNA_methyltr_TrmB"/>
    <property type="match status" value="1"/>
</dbReference>
<dbReference type="InterPro" id="IPR029063">
    <property type="entry name" value="SAM-dependent_MTases_sf"/>
</dbReference>
<dbReference type="InterPro" id="IPR003358">
    <property type="entry name" value="tRNA_(Gua-N-7)_MeTrfase_Trmb"/>
</dbReference>
<dbReference type="InterPro" id="IPR055361">
    <property type="entry name" value="tRNA_methyltr_TrmB_bact"/>
</dbReference>
<dbReference type="NCBIfam" id="TIGR00091">
    <property type="entry name" value="tRNA (guanosine(46)-N7)-methyltransferase TrmB"/>
    <property type="match status" value="1"/>
</dbReference>
<dbReference type="PANTHER" id="PTHR23417">
    <property type="entry name" value="3-DEOXY-D-MANNO-OCTULOSONIC-ACID TRANSFERASE/TRNA GUANINE-N 7 - -METHYLTRANSFERASE"/>
    <property type="match status" value="1"/>
</dbReference>
<dbReference type="PANTHER" id="PTHR23417:SF14">
    <property type="entry name" value="PENTACOTRIPEPTIDE-REPEAT REGION OF PRORP DOMAIN-CONTAINING PROTEIN"/>
    <property type="match status" value="1"/>
</dbReference>
<dbReference type="Pfam" id="PF02390">
    <property type="entry name" value="Methyltransf_4"/>
    <property type="match status" value="1"/>
</dbReference>
<dbReference type="SUPFAM" id="SSF53335">
    <property type="entry name" value="S-adenosyl-L-methionine-dependent methyltransferases"/>
    <property type="match status" value="1"/>
</dbReference>
<dbReference type="PROSITE" id="PS51625">
    <property type="entry name" value="SAM_MT_TRMB"/>
    <property type="match status" value="1"/>
</dbReference>
<name>TRMB_AROAE</name>
<accession>Q8G9C6</accession>
<evidence type="ECO:0000250" key="1"/>
<evidence type="ECO:0000255" key="2">
    <source>
        <dbReference type="HAMAP-Rule" id="MF_01057"/>
    </source>
</evidence>
<evidence type="ECO:0000256" key="3">
    <source>
        <dbReference type="SAM" id="MobiDB-lite"/>
    </source>
</evidence>
<gene>
    <name evidence="2" type="primary">trmB</name>
    <name type="ordered locus">AZOSEA12950</name>
    <name type="ORF">c1A43</name>
</gene>
<feature type="chain" id="PRO_0000171287" description="tRNA (guanine-N(7)-)-methyltransferase">
    <location>
        <begin position="1"/>
        <end position="259"/>
    </location>
</feature>
<feature type="region of interest" description="Disordered" evidence="3">
    <location>
        <begin position="1"/>
        <end position="36"/>
    </location>
</feature>
<feature type="compositionally biased region" description="Low complexity" evidence="3">
    <location>
        <begin position="14"/>
        <end position="29"/>
    </location>
</feature>
<feature type="active site" evidence="1">
    <location>
        <position position="166"/>
    </location>
</feature>
<feature type="binding site" evidence="2">
    <location>
        <position position="91"/>
    </location>
    <ligand>
        <name>S-adenosyl-L-methionine</name>
        <dbReference type="ChEBI" id="CHEBI:59789"/>
    </ligand>
</feature>
<feature type="binding site" evidence="2">
    <location>
        <position position="116"/>
    </location>
    <ligand>
        <name>S-adenosyl-L-methionine</name>
        <dbReference type="ChEBI" id="CHEBI:59789"/>
    </ligand>
</feature>
<feature type="binding site" evidence="2">
    <location>
        <position position="143"/>
    </location>
    <ligand>
        <name>S-adenosyl-L-methionine</name>
        <dbReference type="ChEBI" id="CHEBI:59789"/>
    </ligand>
</feature>
<feature type="binding site" evidence="2">
    <location>
        <position position="166"/>
    </location>
    <ligand>
        <name>S-adenosyl-L-methionine</name>
        <dbReference type="ChEBI" id="CHEBI:59789"/>
    </ligand>
</feature>
<feature type="binding site" evidence="2">
    <location>
        <position position="170"/>
    </location>
    <ligand>
        <name>substrate</name>
    </ligand>
</feature>
<feature type="binding site" evidence="2">
    <location>
        <position position="202"/>
    </location>
    <ligand>
        <name>substrate</name>
    </ligand>
</feature>
<feature type="binding site" evidence="2">
    <location>
        <begin position="237"/>
        <end position="240"/>
    </location>
    <ligand>
        <name>substrate</name>
    </ligand>
</feature>
<keyword id="KW-0489">Methyltransferase</keyword>
<keyword id="KW-1185">Reference proteome</keyword>
<keyword id="KW-0949">S-adenosyl-L-methionine</keyword>
<keyword id="KW-0808">Transferase</keyword>
<keyword id="KW-0819">tRNA processing</keyword>
<comment type="function">
    <text evidence="2">Catalyzes the formation of N(7)-methylguanine at position 46 (m7G46) in tRNA.</text>
</comment>
<comment type="catalytic activity">
    <reaction evidence="2">
        <text>guanosine(46) in tRNA + S-adenosyl-L-methionine = N(7)-methylguanosine(46) in tRNA + S-adenosyl-L-homocysteine</text>
        <dbReference type="Rhea" id="RHEA:42708"/>
        <dbReference type="Rhea" id="RHEA-COMP:10188"/>
        <dbReference type="Rhea" id="RHEA-COMP:10189"/>
        <dbReference type="ChEBI" id="CHEBI:57856"/>
        <dbReference type="ChEBI" id="CHEBI:59789"/>
        <dbReference type="ChEBI" id="CHEBI:74269"/>
        <dbReference type="ChEBI" id="CHEBI:74480"/>
        <dbReference type="EC" id="2.1.1.33"/>
    </reaction>
</comment>
<comment type="pathway">
    <text evidence="2">tRNA modification; N(7)-methylguanine-tRNA biosynthesis.</text>
</comment>
<comment type="similarity">
    <text evidence="2">Belongs to the class I-like SAM-binding methyltransferase superfamily. TrmB family.</text>
</comment>
<organism>
    <name type="scientific">Aromatoleum aromaticum (strain DSM 19018 / LMG 30748 / EbN1)</name>
    <name type="common">Azoarcus sp. (strain EbN1)</name>
    <dbReference type="NCBI Taxonomy" id="76114"/>
    <lineage>
        <taxon>Bacteria</taxon>
        <taxon>Pseudomonadati</taxon>
        <taxon>Pseudomonadota</taxon>
        <taxon>Betaproteobacteria</taxon>
        <taxon>Rhodocyclales</taxon>
        <taxon>Rhodocyclaceae</taxon>
        <taxon>Aromatoleum</taxon>
    </lineage>
</organism>